<protein>
    <recommendedName>
        <fullName>Transcription termination/antitermination protein NusG</fullName>
    </recommendedName>
</protein>
<accession>P36262</accession>
<reference key="1">
    <citation type="journal article" date="1993" name="Curr. Microbiol.">
        <title>The genome of the non-cultured, bacterial-like organism associated with citrus greening disease contains the nusG-rplKAJL-rpoBC gene cluster and the gene for a bacteriophage type DNA polymerase.</title>
        <authorList>
            <person name="Villechanoux S."/>
            <person name="Garnier M."/>
            <person name="Laigret F."/>
            <person name="Renaudin J."/>
            <person name="Bove J.M."/>
        </authorList>
    </citation>
    <scope>NUCLEOTIDE SEQUENCE [GENOMIC DNA]</scope>
</reference>
<sequence>NQVEAAVQRPVSSVFFEVGERVCVSDGPFASFNGIVKNVDEEKSRVHVEVVIFGRVTPVELAYNQVEKIV</sequence>
<name>NUSG_LIBAS</name>
<evidence type="ECO:0000250" key="1"/>
<evidence type="ECO:0000305" key="2"/>
<gene>
    <name type="primary">nusG</name>
</gene>
<organism>
    <name type="scientific">Liberibacter asiaticus</name>
    <name type="common">Citrus greening disease</name>
    <name type="synonym">Liberobacter asiaticum</name>
    <dbReference type="NCBI Taxonomy" id="34021"/>
    <lineage>
        <taxon>Bacteria</taxon>
        <taxon>Pseudomonadati</taxon>
        <taxon>Pseudomonadota</taxon>
        <taxon>Alphaproteobacteria</taxon>
        <taxon>Hyphomicrobiales</taxon>
        <taxon>Rhizobiaceae</taxon>
        <taxon>Liberibacter</taxon>
    </lineage>
</organism>
<feature type="chain" id="PRO_0000113933" description="Transcription termination/antitermination protein NusG">
    <location>
        <begin position="1" status="less than"/>
        <end position="70"/>
    </location>
</feature>
<feature type="domain" description="KOW">
    <location>
        <begin position="18"/>
        <end position="49"/>
    </location>
</feature>
<feature type="non-terminal residue">
    <location>
        <position position="1"/>
    </location>
</feature>
<dbReference type="EMBL" id="M94319">
    <property type="protein sequence ID" value="AAA23104.1"/>
    <property type="molecule type" value="Genomic_DNA"/>
</dbReference>
<dbReference type="SMR" id="P36262"/>
<dbReference type="GO" id="GO:0005829">
    <property type="term" value="C:cytosol"/>
    <property type="evidence" value="ECO:0007669"/>
    <property type="project" value="TreeGrafter"/>
</dbReference>
<dbReference type="GO" id="GO:0006353">
    <property type="term" value="P:DNA-templated transcription termination"/>
    <property type="evidence" value="ECO:0007669"/>
    <property type="project" value="UniProtKB-KW"/>
</dbReference>
<dbReference type="GO" id="GO:0032784">
    <property type="term" value="P:regulation of DNA-templated transcription elongation"/>
    <property type="evidence" value="ECO:0007669"/>
    <property type="project" value="InterPro"/>
</dbReference>
<dbReference type="GO" id="GO:0031564">
    <property type="term" value="P:transcription antitermination"/>
    <property type="evidence" value="ECO:0007669"/>
    <property type="project" value="UniProtKB-KW"/>
</dbReference>
<dbReference type="CDD" id="cd06091">
    <property type="entry name" value="KOW_NusG"/>
    <property type="match status" value="1"/>
</dbReference>
<dbReference type="FunFam" id="2.30.30.30:FF:000002">
    <property type="entry name" value="Transcription termination/antitermination factor NusG"/>
    <property type="match status" value="1"/>
</dbReference>
<dbReference type="Gene3D" id="2.30.30.30">
    <property type="match status" value="1"/>
</dbReference>
<dbReference type="InterPro" id="IPR005824">
    <property type="entry name" value="KOW"/>
</dbReference>
<dbReference type="InterPro" id="IPR043425">
    <property type="entry name" value="NusG-like"/>
</dbReference>
<dbReference type="InterPro" id="IPR014722">
    <property type="entry name" value="Rib_uL2_dom2"/>
</dbReference>
<dbReference type="InterPro" id="IPR001062">
    <property type="entry name" value="Transcrpt_antiterm_NusG"/>
</dbReference>
<dbReference type="InterPro" id="IPR015869">
    <property type="entry name" value="Transcrpt_antiterm_NusG_bac_CS"/>
</dbReference>
<dbReference type="InterPro" id="IPR008991">
    <property type="entry name" value="Translation_prot_SH3-like_sf"/>
</dbReference>
<dbReference type="PANTHER" id="PTHR30265">
    <property type="entry name" value="RHO-INTERACTING TRANSCRIPTION TERMINATION FACTOR NUSG"/>
    <property type="match status" value="1"/>
</dbReference>
<dbReference type="PANTHER" id="PTHR30265:SF2">
    <property type="entry name" value="TRANSCRIPTION TERMINATION_ANTITERMINATION PROTEIN NUSG"/>
    <property type="match status" value="1"/>
</dbReference>
<dbReference type="Pfam" id="PF00467">
    <property type="entry name" value="KOW"/>
    <property type="match status" value="1"/>
</dbReference>
<dbReference type="PRINTS" id="PR00338">
    <property type="entry name" value="NUSGTNSCPFCT"/>
</dbReference>
<dbReference type="SMART" id="SM00739">
    <property type="entry name" value="KOW"/>
    <property type="match status" value="1"/>
</dbReference>
<dbReference type="SUPFAM" id="SSF50104">
    <property type="entry name" value="Translation proteins SH3-like domain"/>
    <property type="match status" value="1"/>
</dbReference>
<dbReference type="PROSITE" id="PS01014">
    <property type="entry name" value="NUSG"/>
    <property type="match status" value="1"/>
</dbReference>
<proteinExistence type="inferred from homology"/>
<comment type="function">
    <text evidence="1">Participates in transcription elongation, termination and antitermination.</text>
</comment>
<comment type="similarity">
    <text evidence="2">Belongs to the NusG family.</text>
</comment>
<keyword id="KW-0804">Transcription</keyword>
<keyword id="KW-0889">Transcription antitermination</keyword>
<keyword id="KW-0805">Transcription regulation</keyword>
<keyword id="KW-0806">Transcription termination</keyword>